<name>RAVA_ECO81</name>
<proteinExistence type="inferred from homology"/>
<dbReference type="EC" id="3.6.1.-" evidence="1"/>
<dbReference type="EMBL" id="CU928162">
    <property type="protein sequence ID" value="CAR10556.2"/>
    <property type="molecule type" value="Genomic_DNA"/>
</dbReference>
<dbReference type="RefSeq" id="WP_001297967.1">
    <property type="nucleotide sequence ID" value="NC_011745.1"/>
</dbReference>
<dbReference type="SMR" id="B7N2I5"/>
<dbReference type="KEGG" id="ecq:ECED1_4436"/>
<dbReference type="HOGENOM" id="CLU_018678_1_0_6"/>
<dbReference type="Proteomes" id="UP000000748">
    <property type="component" value="Chromosome"/>
</dbReference>
<dbReference type="GO" id="GO:0005737">
    <property type="term" value="C:cytoplasm"/>
    <property type="evidence" value="ECO:0007669"/>
    <property type="project" value="UniProtKB-SubCell"/>
</dbReference>
<dbReference type="GO" id="GO:0005524">
    <property type="term" value="F:ATP binding"/>
    <property type="evidence" value="ECO:0007669"/>
    <property type="project" value="UniProtKB-KW"/>
</dbReference>
<dbReference type="GO" id="GO:0016887">
    <property type="term" value="F:ATP hydrolysis activity"/>
    <property type="evidence" value="ECO:0007669"/>
    <property type="project" value="UniProtKB-UniRule"/>
</dbReference>
<dbReference type="CDD" id="cd00009">
    <property type="entry name" value="AAA"/>
    <property type="match status" value="1"/>
</dbReference>
<dbReference type="FunFam" id="3.40.50.300:FF:000410">
    <property type="entry name" value="ATPase RavA"/>
    <property type="match status" value="1"/>
</dbReference>
<dbReference type="Gene3D" id="1.20.58.1510">
    <property type="match status" value="1"/>
</dbReference>
<dbReference type="Gene3D" id="2.40.128.430">
    <property type="match status" value="1"/>
</dbReference>
<dbReference type="Gene3D" id="3.40.50.300">
    <property type="entry name" value="P-loop containing nucleotide triphosphate hydrolases"/>
    <property type="match status" value="1"/>
</dbReference>
<dbReference type="HAMAP" id="MF_01625">
    <property type="entry name" value="ATPase_RavA"/>
    <property type="match status" value="1"/>
</dbReference>
<dbReference type="InterPro" id="IPR003593">
    <property type="entry name" value="AAA+_ATPase"/>
</dbReference>
<dbReference type="InterPro" id="IPR023671">
    <property type="entry name" value="ATPase_RavA"/>
</dbReference>
<dbReference type="InterPro" id="IPR022547">
    <property type="entry name" value="ATPase_RavA_C"/>
</dbReference>
<dbReference type="InterPro" id="IPR045427">
    <property type="entry name" value="MoxR"/>
</dbReference>
<dbReference type="InterPro" id="IPR027417">
    <property type="entry name" value="P-loop_NTPase"/>
</dbReference>
<dbReference type="InterPro" id="IPR041538">
    <property type="entry name" value="RavA-like_AAA_lid"/>
</dbReference>
<dbReference type="InterPro" id="IPR050513">
    <property type="entry name" value="RavA_ATPases"/>
</dbReference>
<dbReference type="InterPro" id="IPR046898">
    <property type="entry name" value="RavA_LARA_dom"/>
</dbReference>
<dbReference type="InterPro" id="IPR046932">
    <property type="entry name" value="RavA_LARA_sf"/>
</dbReference>
<dbReference type="NCBIfam" id="NF010054">
    <property type="entry name" value="PRK13531.1"/>
    <property type="match status" value="1"/>
</dbReference>
<dbReference type="PANTHER" id="PTHR32204">
    <property type="entry name" value="ATPASE RAVA"/>
    <property type="match status" value="1"/>
</dbReference>
<dbReference type="PANTHER" id="PTHR32204:SF0">
    <property type="entry name" value="ATPASE RAVA"/>
    <property type="match status" value="1"/>
</dbReference>
<dbReference type="Pfam" id="PF17868">
    <property type="entry name" value="AAA_lid_8"/>
    <property type="match status" value="1"/>
</dbReference>
<dbReference type="Pfam" id="PF12592">
    <property type="entry name" value="ATPase_RavA_C"/>
    <property type="match status" value="1"/>
</dbReference>
<dbReference type="Pfam" id="PF20030">
    <property type="entry name" value="bpMoxR"/>
    <property type="match status" value="1"/>
</dbReference>
<dbReference type="Pfam" id="PF20265">
    <property type="entry name" value="LARA_dom"/>
    <property type="match status" value="1"/>
</dbReference>
<dbReference type="SMART" id="SM00382">
    <property type="entry name" value="AAA"/>
    <property type="match status" value="1"/>
</dbReference>
<dbReference type="SUPFAM" id="SSF52540">
    <property type="entry name" value="P-loop containing nucleoside triphosphate hydrolases"/>
    <property type="match status" value="1"/>
</dbReference>
<gene>
    <name evidence="1" type="primary">ravA</name>
    <name type="ordered locus">ECED1_4436</name>
</gene>
<keyword id="KW-0067">ATP-binding</keyword>
<keyword id="KW-0143">Chaperone</keyword>
<keyword id="KW-0963">Cytoplasm</keyword>
<keyword id="KW-0378">Hydrolase</keyword>
<keyword id="KW-0547">Nucleotide-binding</keyword>
<protein>
    <recommendedName>
        <fullName evidence="1">Regulatory ATPase RavA</fullName>
        <ecNumber evidence="1">3.6.1.-</ecNumber>
    </recommendedName>
    <alternativeName>
        <fullName evidence="1">Regulatory ATPase variant A</fullName>
    </alternativeName>
</protein>
<feature type="chain" id="PRO_1000186126" description="Regulatory ATPase RavA">
    <location>
        <begin position="1"/>
        <end position="498"/>
    </location>
</feature>
<feature type="binding site" evidence="1">
    <location>
        <position position="23"/>
    </location>
    <ligand>
        <name>ADP</name>
        <dbReference type="ChEBI" id="CHEBI:456216"/>
    </ligand>
</feature>
<feature type="binding site" evidence="1">
    <location>
        <position position="49"/>
    </location>
    <ligand>
        <name>ADP</name>
        <dbReference type="ChEBI" id="CHEBI:456216"/>
    </ligand>
</feature>
<feature type="binding site" evidence="1">
    <location>
        <position position="50"/>
    </location>
    <ligand>
        <name>ADP</name>
        <dbReference type="ChEBI" id="CHEBI:456216"/>
    </ligand>
</feature>
<feature type="binding site" evidence="1">
    <location>
        <position position="51"/>
    </location>
    <ligand>
        <name>ADP</name>
        <dbReference type="ChEBI" id="CHEBI:456216"/>
    </ligand>
</feature>
<feature type="binding site" evidence="1">
    <location>
        <position position="52"/>
    </location>
    <ligand>
        <name>ADP</name>
        <dbReference type="ChEBI" id="CHEBI:456216"/>
    </ligand>
</feature>
<feature type="binding site" evidence="1">
    <location>
        <position position="53"/>
    </location>
    <ligand>
        <name>ADP</name>
        <dbReference type="ChEBI" id="CHEBI:456216"/>
    </ligand>
</feature>
<feature type="binding site" evidence="1">
    <location>
        <position position="54"/>
    </location>
    <ligand>
        <name>ADP</name>
        <dbReference type="ChEBI" id="CHEBI:456216"/>
    </ligand>
</feature>
<feature type="binding site" evidence="1">
    <location>
        <position position="196"/>
    </location>
    <ligand>
        <name>ADP</name>
        <dbReference type="ChEBI" id="CHEBI:456216"/>
    </ligand>
</feature>
<reference key="1">
    <citation type="journal article" date="2009" name="PLoS Genet.">
        <title>Organised genome dynamics in the Escherichia coli species results in highly diverse adaptive paths.</title>
        <authorList>
            <person name="Touchon M."/>
            <person name="Hoede C."/>
            <person name="Tenaillon O."/>
            <person name="Barbe V."/>
            <person name="Baeriswyl S."/>
            <person name="Bidet P."/>
            <person name="Bingen E."/>
            <person name="Bonacorsi S."/>
            <person name="Bouchier C."/>
            <person name="Bouvet O."/>
            <person name="Calteau A."/>
            <person name="Chiapello H."/>
            <person name="Clermont O."/>
            <person name="Cruveiller S."/>
            <person name="Danchin A."/>
            <person name="Diard M."/>
            <person name="Dossat C."/>
            <person name="Karoui M.E."/>
            <person name="Frapy E."/>
            <person name="Garry L."/>
            <person name="Ghigo J.M."/>
            <person name="Gilles A.M."/>
            <person name="Johnson J."/>
            <person name="Le Bouguenec C."/>
            <person name="Lescat M."/>
            <person name="Mangenot S."/>
            <person name="Martinez-Jehanne V."/>
            <person name="Matic I."/>
            <person name="Nassif X."/>
            <person name="Oztas S."/>
            <person name="Petit M.A."/>
            <person name="Pichon C."/>
            <person name="Rouy Z."/>
            <person name="Ruf C.S."/>
            <person name="Schneider D."/>
            <person name="Tourret J."/>
            <person name="Vacherie B."/>
            <person name="Vallenet D."/>
            <person name="Medigue C."/>
            <person name="Rocha E.P.C."/>
            <person name="Denamur E."/>
        </authorList>
    </citation>
    <scope>NUCLEOTIDE SEQUENCE [LARGE SCALE GENOMIC DNA]</scope>
    <source>
        <strain>ED1a</strain>
    </source>
</reference>
<sequence>MAHPHLLAERISRLSSSLEKGLYERSHAIRLCLLAALSGESVFLLGPPGIAKSLIARRLKFAFQNARAFEYLMTRFSTPEEVFGPLSIQALKDEGRYERLTSGYLPEAEIVFLDEIWKAGPAILNTLLTAINERQFRNGALVEKIPMRLLVAASNELPEADSSLEALYDRMLIRLWLDKVQDKANFRSMLTSQQDENDNPVPASLQITDEEYERWQKEIGEITLPDHVFELIFMLRQQLDKLPDAPYVSDRRWKKAIRLLQASAFFSGRSAVAPVDLILLKDCLWYDAQSLNLIQQQIDVLMTGHAWQQQGMLTRLGAIVQRHLQLQQQQSDKTALTVIRLGGIFSRRQQYQLPVNVTASTLTLLLQKPLKLHDMEVVHISFERSALEQWLSKGGEIRGKLNGIGFAQKLNLEVDSAQHLVVRDVSLQGSTLALPGSSAEGLPSEIKQQLEELESDWRKQHALFSEQQKCLFIPGDWLGRIEASLQDVGAQIRQAQQC</sequence>
<accession>B7N2I5</accession>
<evidence type="ECO:0000255" key="1">
    <source>
        <dbReference type="HAMAP-Rule" id="MF_01625"/>
    </source>
</evidence>
<comment type="function">
    <text evidence="1">Component of the RavA-ViaA chaperone complex, which may act on the membrane to optimize the function of some of the respiratory chains. RavA functions as an ATPase.</text>
</comment>
<comment type="catalytic activity">
    <reaction evidence="1">
        <text>ATP + H2O = ADP + phosphate + H(+)</text>
        <dbReference type="Rhea" id="RHEA:13065"/>
        <dbReference type="ChEBI" id="CHEBI:15377"/>
        <dbReference type="ChEBI" id="CHEBI:15378"/>
        <dbReference type="ChEBI" id="CHEBI:30616"/>
        <dbReference type="ChEBI" id="CHEBI:43474"/>
        <dbReference type="ChEBI" id="CHEBI:456216"/>
    </reaction>
</comment>
<comment type="activity regulation">
    <text evidence="1">ATPase activity is stimulated by ViaA.</text>
</comment>
<comment type="subunit">
    <text evidence="1">Homohexamer. Interacts with ViaA.</text>
</comment>
<comment type="subcellular location">
    <subcellularLocation>
        <location evidence="1">Cytoplasm</location>
    </subcellularLocation>
</comment>
<comment type="similarity">
    <text evidence="1">Belongs to the RavA family.</text>
</comment>
<organism>
    <name type="scientific">Escherichia coli O81 (strain ED1a)</name>
    <dbReference type="NCBI Taxonomy" id="585397"/>
    <lineage>
        <taxon>Bacteria</taxon>
        <taxon>Pseudomonadati</taxon>
        <taxon>Pseudomonadota</taxon>
        <taxon>Gammaproteobacteria</taxon>
        <taxon>Enterobacterales</taxon>
        <taxon>Enterobacteriaceae</taxon>
        <taxon>Escherichia</taxon>
    </lineage>
</organism>